<accession>Q07KK6</accession>
<name>RL7_RHOP5</name>
<proteinExistence type="inferred from homology"/>
<sequence length="123" mass="12702">MADLQKIVDDLSSLTVLEAAELAKLLEEKWGVSAAAAVAVAGPAAAAAAPAEEKTEFTVVLASAGDKKIEVIKEVRAITGLGLKEAKDLVEGAPKPVKEGVNKDEAEKVKAQLEKAGAKVELK</sequence>
<gene>
    <name evidence="1" type="primary">rplL</name>
    <name type="ordered locus">RPE_3598</name>
</gene>
<feature type="chain" id="PRO_1000007071" description="Large ribosomal subunit protein bL12">
    <location>
        <begin position="1"/>
        <end position="123"/>
    </location>
</feature>
<evidence type="ECO:0000255" key="1">
    <source>
        <dbReference type="HAMAP-Rule" id="MF_00368"/>
    </source>
</evidence>
<evidence type="ECO:0000305" key="2"/>
<protein>
    <recommendedName>
        <fullName evidence="1">Large ribosomal subunit protein bL12</fullName>
    </recommendedName>
    <alternativeName>
        <fullName evidence="2">50S ribosomal protein L7/L12</fullName>
    </alternativeName>
</protein>
<keyword id="KW-0687">Ribonucleoprotein</keyword>
<keyword id="KW-0689">Ribosomal protein</keyword>
<comment type="function">
    <text evidence="1">Forms part of the ribosomal stalk which helps the ribosome interact with GTP-bound translation factors. Is thus essential for accurate translation.</text>
</comment>
<comment type="subunit">
    <text evidence="1">Homodimer. Part of the ribosomal stalk of the 50S ribosomal subunit. Forms a multimeric L10(L12)X complex, where L10 forms an elongated spine to which 2 to 4 L12 dimers bind in a sequential fashion. Binds GTP-bound translation factors.</text>
</comment>
<comment type="similarity">
    <text evidence="1">Belongs to the bacterial ribosomal protein bL12 family.</text>
</comment>
<dbReference type="EMBL" id="CP000463">
    <property type="protein sequence ID" value="ABJ07528.1"/>
    <property type="molecule type" value="Genomic_DNA"/>
</dbReference>
<dbReference type="SMR" id="Q07KK6"/>
<dbReference type="STRING" id="316055.RPE_3598"/>
<dbReference type="KEGG" id="rpe:RPE_3598"/>
<dbReference type="eggNOG" id="COG0222">
    <property type="taxonomic scope" value="Bacteria"/>
</dbReference>
<dbReference type="HOGENOM" id="CLU_086499_3_0_5"/>
<dbReference type="OrthoDB" id="9811748at2"/>
<dbReference type="GO" id="GO:0022625">
    <property type="term" value="C:cytosolic large ribosomal subunit"/>
    <property type="evidence" value="ECO:0007669"/>
    <property type="project" value="TreeGrafter"/>
</dbReference>
<dbReference type="GO" id="GO:0003729">
    <property type="term" value="F:mRNA binding"/>
    <property type="evidence" value="ECO:0007669"/>
    <property type="project" value="TreeGrafter"/>
</dbReference>
<dbReference type="GO" id="GO:0003735">
    <property type="term" value="F:structural constituent of ribosome"/>
    <property type="evidence" value="ECO:0007669"/>
    <property type="project" value="InterPro"/>
</dbReference>
<dbReference type="GO" id="GO:0006412">
    <property type="term" value="P:translation"/>
    <property type="evidence" value="ECO:0007669"/>
    <property type="project" value="UniProtKB-UniRule"/>
</dbReference>
<dbReference type="CDD" id="cd00387">
    <property type="entry name" value="Ribosomal_L7_L12"/>
    <property type="match status" value="1"/>
</dbReference>
<dbReference type="FunFam" id="1.20.5.710:FF:000007">
    <property type="entry name" value="50S ribosomal protein L7/L12"/>
    <property type="match status" value="1"/>
</dbReference>
<dbReference type="FunFam" id="3.30.1390.10:FF:000001">
    <property type="entry name" value="50S ribosomal protein L7/L12"/>
    <property type="match status" value="1"/>
</dbReference>
<dbReference type="Gene3D" id="3.30.1390.10">
    <property type="match status" value="1"/>
</dbReference>
<dbReference type="Gene3D" id="1.20.5.710">
    <property type="entry name" value="Single helix bin"/>
    <property type="match status" value="1"/>
</dbReference>
<dbReference type="HAMAP" id="MF_00368">
    <property type="entry name" value="Ribosomal_bL12"/>
    <property type="match status" value="1"/>
</dbReference>
<dbReference type="InterPro" id="IPR000206">
    <property type="entry name" value="Ribosomal_bL12"/>
</dbReference>
<dbReference type="InterPro" id="IPR013823">
    <property type="entry name" value="Ribosomal_bL12_C"/>
</dbReference>
<dbReference type="InterPro" id="IPR014719">
    <property type="entry name" value="Ribosomal_bL12_C/ClpS-like"/>
</dbReference>
<dbReference type="InterPro" id="IPR008932">
    <property type="entry name" value="Ribosomal_bL12_oligo"/>
</dbReference>
<dbReference type="InterPro" id="IPR036235">
    <property type="entry name" value="Ribosomal_bL12_oligo_N_sf"/>
</dbReference>
<dbReference type="NCBIfam" id="TIGR00855">
    <property type="entry name" value="L12"/>
    <property type="match status" value="1"/>
</dbReference>
<dbReference type="PANTHER" id="PTHR45987">
    <property type="entry name" value="39S RIBOSOMAL PROTEIN L12"/>
    <property type="match status" value="1"/>
</dbReference>
<dbReference type="PANTHER" id="PTHR45987:SF4">
    <property type="entry name" value="LARGE RIBOSOMAL SUBUNIT PROTEIN BL12M"/>
    <property type="match status" value="1"/>
</dbReference>
<dbReference type="Pfam" id="PF00542">
    <property type="entry name" value="Ribosomal_L12"/>
    <property type="match status" value="1"/>
</dbReference>
<dbReference type="Pfam" id="PF16320">
    <property type="entry name" value="Ribosomal_L12_N"/>
    <property type="match status" value="1"/>
</dbReference>
<dbReference type="SUPFAM" id="SSF54736">
    <property type="entry name" value="ClpS-like"/>
    <property type="match status" value="1"/>
</dbReference>
<dbReference type="SUPFAM" id="SSF48300">
    <property type="entry name" value="Ribosomal protein L7/12, oligomerisation (N-terminal) domain"/>
    <property type="match status" value="1"/>
</dbReference>
<reference key="1">
    <citation type="submission" date="2006-09" db="EMBL/GenBank/DDBJ databases">
        <title>Complete sequence of Rhodopseudomonas palustris BisA53.</title>
        <authorList>
            <consortium name="US DOE Joint Genome Institute"/>
            <person name="Copeland A."/>
            <person name="Lucas S."/>
            <person name="Lapidus A."/>
            <person name="Barry K."/>
            <person name="Detter J.C."/>
            <person name="Glavina del Rio T."/>
            <person name="Hammon N."/>
            <person name="Israni S."/>
            <person name="Dalin E."/>
            <person name="Tice H."/>
            <person name="Pitluck S."/>
            <person name="Chain P."/>
            <person name="Malfatti S."/>
            <person name="Shin M."/>
            <person name="Vergez L."/>
            <person name="Schmutz J."/>
            <person name="Larimer F."/>
            <person name="Land M."/>
            <person name="Hauser L."/>
            <person name="Pelletier D.A."/>
            <person name="Kyrpides N."/>
            <person name="Kim E."/>
            <person name="Harwood C.S."/>
            <person name="Oda Y."/>
            <person name="Richardson P."/>
        </authorList>
    </citation>
    <scope>NUCLEOTIDE SEQUENCE [LARGE SCALE GENOMIC DNA]</scope>
    <source>
        <strain>BisA53</strain>
    </source>
</reference>
<organism>
    <name type="scientific">Rhodopseudomonas palustris (strain BisA53)</name>
    <dbReference type="NCBI Taxonomy" id="316055"/>
    <lineage>
        <taxon>Bacteria</taxon>
        <taxon>Pseudomonadati</taxon>
        <taxon>Pseudomonadota</taxon>
        <taxon>Alphaproteobacteria</taxon>
        <taxon>Hyphomicrobiales</taxon>
        <taxon>Nitrobacteraceae</taxon>
        <taxon>Rhodopseudomonas</taxon>
    </lineage>
</organism>